<proteinExistence type="inferred from homology"/>
<name>RM45_CAEEL</name>
<evidence type="ECO:0000250" key="1"/>
<evidence type="ECO:0000255" key="2"/>
<evidence type="ECO:0000256" key="3">
    <source>
        <dbReference type="SAM" id="MobiDB-lite"/>
    </source>
</evidence>
<evidence type="ECO:0000305" key="4"/>
<feature type="transit peptide" description="Mitochondrion" evidence="2">
    <location>
        <begin position="1"/>
        <end status="unknown"/>
    </location>
</feature>
<feature type="chain" id="PRO_0000043096" description="Large ribosomal subunit protein mL45">
    <location>
        <begin status="unknown"/>
        <end position="357"/>
    </location>
</feature>
<feature type="region of interest" description="Disordered" evidence="3">
    <location>
        <begin position="333"/>
        <end position="357"/>
    </location>
</feature>
<feature type="compositionally biased region" description="Basic and acidic residues" evidence="3">
    <location>
        <begin position="341"/>
        <end position="357"/>
    </location>
</feature>
<keyword id="KW-0496">Mitochondrion</keyword>
<keyword id="KW-1185">Reference proteome</keyword>
<keyword id="KW-0687">Ribonucleoprotein</keyword>
<keyword id="KW-0689">Ribosomal protein</keyword>
<keyword id="KW-0809">Transit peptide</keyword>
<dbReference type="EMBL" id="FO081827">
    <property type="protein sequence ID" value="CCD73925.1"/>
    <property type="molecule type" value="Genomic_DNA"/>
</dbReference>
<dbReference type="RefSeq" id="NP_497347.3">
    <property type="nucleotide sequence ID" value="NM_064946.8"/>
</dbReference>
<dbReference type="SMR" id="Q95Y71"/>
<dbReference type="BioGRID" id="55598">
    <property type="interactions" value="2"/>
</dbReference>
<dbReference type="FunCoup" id="Q95Y71">
    <property type="interactions" value="2175"/>
</dbReference>
<dbReference type="STRING" id="6239.Y119D3B.16.1"/>
<dbReference type="PaxDb" id="6239-Y119D3B.16"/>
<dbReference type="PeptideAtlas" id="Q95Y71"/>
<dbReference type="EnsemblMetazoa" id="Y119D3B.16.1">
    <property type="protein sequence ID" value="Y119D3B.16.1"/>
    <property type="gene ID" value="WBGene00022493"/>
</dbReference>
<dbReference type="GeneID" id="191044"/>
<dbReference type="KEGG" id="cel:CELE_Y119D3B.16"/>
<dbReference type="UCSC" id="Y119D3B.16">
    <property type="organism name" value="c. elegans"/>
</dbReference>
<dbReference type="AGR" id="WB:WBGene00022493"/>
<dbReference type="CTD" id="191044"/>
<dbReference type="WormBase" id="Y119D3B.16">
    <property type="protein sequence ID" value="CE39288"/>
    <property type="gene ID" value="WBGene00022493"/>
    <property type="gene designation" value="mrpl-45"/>
</dbReference>
<dbReference type="eggNOG" id="KOG4599">
    <property type="taxonomic scope" value="Eukaryota"/>
</dbReference>
<dbReference type="GeneTree" id="ENSGT00390000012679"/>
<dbReference type="HOGENOM" id="CLU_038409_1_0_1"/>
<dbReference type="InParanoid" id="Q95Y71"/>
<dbReference type="OMA" id="HTHMAAK"/>
<dbReference type="OrthoDB" id="19619at2759"/>
<dbReference type="PhylomeDB" id="Q95Y71"/>
<dbReference type="Reactome" id="R-CEL-5389840">
    <property type="pathway name" value="Mitochondrial translation elongation"/>
</dbReference>
<dbReference type="Reactome" id="R-CEL-5419276">
    <property type="pathway name" value="Mitochondrial translation termination"/>
</dbReference>
<dbReference type="PRO" id="PR:Q95Y71"/>
<dbReference type="Proteomes" id="UP000001940">
    <property type="component" value="Chromosome III"/>
</dbReference>
<dbReference type="Bgee" id="WBGene00022493">
    <property type="expression patterns" value="Expressed in pharyngeal muscle cell (C elegans) and 3 other cell types or tissues"/>
</dbReference>
<dbReference type="GO" id="GO:0005739">
    <property type="term" value="C:mitochondrion"/>
    <property type="evidence" value="ECO:0000318"/>
    <property type="project" value="GO_Central"/>
</dbReference>
<dbReference type="GO" id="GO:1990904">
    <property type="term" value="C:ribonucleoprotein complex"/>
    <property type="evidence" value="ECO:0007669"/>
    <property type="project" value="UniProtKB-KW"/>
</dbReference>
<dbReference type="GO" id="GO:0005840">
    <property type="term" value="C:ribosome"/>
    <property type="evidence" value="ECO:0007669"/>
    <property type="project" value="UniProtKB-KW"/>
</dbReference>
<dbReference type="FunFam" id="3.10.450.240:FF:000003">
    <property type="entry name" value="39S ribosomal protein L45, mitochondrial"/>
    <property type="match status" value="1"/>
</dbReference>
<dbReference type="Gene3D" id="3.10.450.240">
    <property type="match status" value="1"/>
</dbReference>
<dbReference type="InterPro" id="IPR051975">
    <property type="entry name" value="mtLSU_mL45"/>
</dbReference>
<dbReference type="InterPro" id="IPR032710">
    <property type="entry name" value="NTF2-like_dom_sf"/>
</dbReference>
<dbReference type="InterPro" id="IPR007379">
    <property type="entry name" value="Tim44-like_dom"/>
</dbReference>
<dbReference type="PANTHER" id="PTHR28554">
    <property type="entry name" value="39S RIBOSOMAL PROTEIN L45, MITOCHONDRIAL"/>
    <property type="match status" value="1"/>
</dbReference>
<dbReference type="PANTHER" id="PTHR28554:SF1">
    <property type="entry name" value="LARGE RIBOSOMAL SUBUNIT PROTEIN ML45"/>
    <property type="match status" value="1"/>
</dbReference>
<dbReference type="Pfam" id="PF04280">
    <property type="entry name" value="Tim44"/>
    <property type="match status" value="1"/>
</dbReference>
<dbReference type="SMART" id="SM00978">
    <property type="entry name" value="Tim44"/>
    <property type="match status" value="1"/>
</dbReference>
<dbReference type="SUPFAM" id="SSF54427">
    <property type="entry name" value="NTF2-like"/>
    <property type="match status" value="1"/>
</dbReference>
<reference key="1">
    <citation type="journal article" date="1998" name="Science">
        <title>Genome sequence of the nematode C. elegans: a platform for investigating biology.</title>
        <authorList>
            <consortium name="The C. elegans sequencing consortium"/>
        </authorList>
    </citation>
    <scope>NUCLEOTIDE SEQUENCE [LARGE SCALE GENOMIC DNA]</scope>
    <source>
        <strain>Bristol N2</strain>
    </source>
</reference>
<organism>
    <name type="scientific">Caenorhabditis elegans</name>
    <dbReference type="NCBI Taxonomy" id="6239"/>
    <lineage>
        <taxon>Eukaryota</taxon>
        <taxon>Metazoa</taxon>
        <taxon>Ecdysozoa</taxon>
        <taxon>Nematoda</taxon>
        <taxon>Chromadorea</taxon>
        <taxon>Rhabditida</taxon>
        <taxon>Rhabditina</taxon>
        <taxon>Rhabditomorpha</taxon>
        <taxon>Rhabditoidea</taxon>
        <taxon>Rhabditidae</taxon>
        <taxon>Peloderinae</taxon>
        <taxon>Caenorhabditis</taxon>
    </lineage>
</organism>
<comment type="subcellular location">
    <subcellularLocation>
        <location evidence="1">Mitochondrion</location>
    </subcellularLocation>
</comment>
<comment type="similarity">
    <text evidence="4">Belongs to the mitochondrion-specific ribosomal protein mL45 family.</text>
</comment>
<sequence>MLGRALVRSFVQPTAAITTQLAGVHHHQEATDMKRFTGVTRSNKAKANRNTHVNEKLFRRMRGRKTLLIELPEDSAREKEAEMSPGEMRTELLKRGINPYKEAQPRVWNEAQVTFQSIYGIADPYVPPENPGSFTDVNNKFDEVKQRIQHKFYNWRMGTNRIRKKQGFEKFDIKTFCAKAEDIYVQAHRALEQRDKTAMYKYITEYAFAKMWPDVENGSVRFELISVLEPSRVVAVRCFDNPPKSGNDIAQITVRMHTRQKLAVYDRFGGLLLGSEDEEKDVVEYVVFENHIAVVDGEWRLHGKIYPKWIDAKQGMVGTQMLSAEQVEKQHAEAKALPLRTTEKLEEAKKEKEQQEI</sequence>
<protein>
    <recommendedName>
        <fullName evidence="4">Large ribosomal subunit protein mL45</fullName>
    </recommendedName>
    <alternativeName>
        <fullName evidence="4">39S ribosomal protein L45, mitochondrial</fullName>
    </alternativeName>
</protein>
<accession>Q95Y71</accession>
<gene>
    <name type="primary">mrpl-45</name>
    <name type="ORF">Y119D3B.16</name>
</gene>